<feature type="chain" id="PRO_0000375277" description="YcgL domain-containing protein ASA_2166">
    <location>
        <begin position="1"/>
        <end position="92"/>
    </location>
</feature>
<feature type="domain" description="YcgL" evidence="1">
    <location>
        <begin position="1"/>
        <end position="85"/>
    </location>
</feature>
<dbReference type="EMBL" id="CP000644">
    <property type="protein sequence ID" value="ABO90231.1"/>
    <property type="molecule type" value="Genomic_DNA"/>
</dbReference>
<dbReference type="RefSeq" id="WP_011898745.1">
    <property type="nucleotide sequence ID" value="NC_009348.1"/>
</dbReference>
<dbReference type="SMR" id="A4SMV9"/>
<dbReference type="STRING" id="29491.GCA_000820065_00435"/>
<dbReference type="KEGG" id="asa:ASA_2166"/>
<dbReference type="eggNOG" id="COG3100">
    <property type="taxonomic scope" value="Bacteria"/>
</dbReference>
<dbReference type="HOGENOM" id="CLU_155118_1_0_6"/>
<dbReference type="Proteomes" id="UP000000225">
    <property type="component" value="Chromosome"/>
</dbReference>
<dbReference type="Gene3D" id="3.10.510.20">
    <property type="entry name" value="YcgL domain"/>
    <property type="match status" value="1"/>
</dbReference>
<dbReference type="HAMAP" id="MF_01866">
    <property type="entry name" value="UPF0745"/>
    <property type="match status" value="1"/>
</dbReference>
<dbReference type="InterPro" id="IPR038068">
    <property type="entry name" value="YcgL-like_sf"/>
</dbReference>
<dbReference type="InterPro" id="IPR027354">
    <property type="entry name" value="YcgL_dom"/>
</dbReference>
<dbReference type="PANTHER" id="PTHR38109">
    <property type="entry name" value="PROTEIN YCGL"/>
    <property type="match status" value="1"/>
</dbReference>
<dbReference type="PANTHER" id="PTHR38109:SF1">
    <property type="entry name" value="PROTEIN YCGL"/>
    <property type="match status" value="1"/>
</dbReference>
<dbReference type="Pfam" id="PF05166">
    <property type="entry name" value="YcgL"/>
    <property type="match status" value="1"/>
</dbReference>
<dbReference type="SUPFAM" id="SSF160191">
    <property type="entry name" value="YcgL-like"/>
    <property type="match status" value="1"/>
</dbReference>
<dbReference type="PROSITE" id="PS51648">
    <property type="entry name" value="YCGL"/>
    <property type="match status" value="1"/>
</dbReference>
<gene>
    <name type="ordered locus">ASA_2166</name>
</gene>
<name>Y2166_AERS4</name>
<reference key="1">
    <citation type="journal article" date="2008" name="BMC Genomics">
        <title>The genome of Aeromonas salmonicida subsp. salmonicida A449: insights into the evolution of a fish pathogen.</title>
        <authorList>
            <person name="Reith M.E."/>
            <person name="Singh R.K."/>
            <person name="Curtis B."/>
            <person name="Boyd J.M."/>
            <person name="Bouevitch A."/>
            <person name="Kimball J."/>
            <person name="Munholland J."/>
            <person name="Murphy C."/>
            <person name="Sarty D."/>
            <person name="Williams J."/>
            <person name="Nash J.H."/>
            <person name="Johnson S.C."/>
            <person name="Brown L.L."/>
        </authorList>
    </citation>
    <scope>NUCLEOTIDE SEQUENCE [LARGE SCALE GENOMIC DNA]</scope>
    <source>
        <strain>A449</strain>
    </source>
</reference>
<proteinExistence type="inferred from homology"/>
<protein>
    <recommendedName>
        <fullName evidence="1">YcgL domain-containing protein ASA_2166</fullName>
    </recommendedName>
</protein>
<evidence type="ECO:0000255" key="1">
    <source>
        <dbReference type="HAMAP-Rule" id="MF_01866"/>
    </source>
</evidence>
<accession>A4SMV9</accession>
<organism>
    <name type="scientific">Aeromonas salmonicida (strain A449)</name>
    <dbReference type="NCBI Taxonomy" id="382245"/>
    <lineage>
        <taxon>Bacteria</taxon>
        <taxon>Pseudomonadati</taxon>
        <taxon>Pseudomonadota</taxon>
        <taxon>Gammaproteobacteria</taxon>
        <taxon>Aeromonadales</taxon>
        <taxon>Aeromonadaceae</taxon>
        <taxon>Aeromonas</taxon>
    </lineage>
</organism>
<sequence>MLCAVYKSRKKAETYLFVERREDFSRVPEVLMSTFGRPELVLMTKLDPAKPLGIASTSRVIEALGSQGFYLQVPPPPENLLEQHKAQLKVSR</sequence>